<sequence>MTAPTTRKDLMIVNMGPQHPSMHGVLRLIVTLDGEDVVDCEPILGYLHRGMEKIAENRTIIQYLPYVTRWDYLATMFTEAITINGPEQLGNIQVPKRASYIRVIMLELSRIASHLLWLGPFMADIGAQTPFFYIFRERELIYDLFEAATGMRMMHNFFRIGGVAADLPYGWIDKCLDFCDYFLTGVAEYQKLITRNPIFLERVEGVGIIGRDEALNWGLSGPMLRASGIEWDLRKVDHYESYDEFDWQVQWQREGDSLARYLVRIGEMTESIKIIQQALEGIPGGPYENLEMRRFDRLKDPEWNDFEYRFISKKPSPTFELSKQELYVRVEAPKGELGIFMIGDQSVFPWRWKIRPPGFINLQILPQLVKRMKLADIMTILGSIDIIMGEVDR</sequence>
<protein>
    <recommendedName>
        <fullName evidence="1">NAD(P)H-quinone oxidoreductase subunit H, chloroplastic</fullName>
        <ecNumber evidence="1">7.1.1.-</ecNumber>
    </recommendedName>
    <alternativeName>
        <fullName>NAD(P)H dehydrogenase subunit H</fullName>
    </alternativeName>
    <alternativeName>
        <fullName evidence="1">NADH-plastoquinone oxidoreductase 49 kDa subunit</fullName>
    </alternativeName>
    <alternativeName>
        <fullName evidence="1">NADH-plastoquinone oxidoreductase subunit H</fullName>
    </alternativeName>
</protein>
<comment type="function">
    <text evidence="1">NDH shuttles electrons from NAD(P)H:plastoquinone, via FMN and iron-sulfur (Fe-S) centers, to quinones in the photosynthetic chain and possibly in a chloroplast respiratory chain. The immediate electron acceptor for the enzyme in this species is believed to be plastoquinone. Couples the redox reaction to proton translocation, and thus conserves the redox energy in a proton gradient.</text>
</comment>
<comment type="catalytic activity">
    <reaction evidence="1">
        <text>a plastoquinone + NADH + (n+1) H(+)(in) = a plastoquinol + NAD(+) + n H(+)(out)</text>
        <dbReference type="Rhea" id="RHEA:42608"/>
        <dbReference type="Rhea" id="RHEA-COMP:9561"/>
        <dbReference type="Rhea" id="RHEA-COMP:9562"/>
        <dbReference type="ChEBI" id="CHEBI:15378"/>
        <dbReference type="ChEBI" id="CHEBI:17757"/>
        <dbReference type="ChEBI" id="CHEBI:57540"/>
        <dbReference type="ChEBI" id="CHEBI:57945"/>
        <dbReference type="ChEBI" id="CHEBI:62192"/>
    </reaction>
</comment>
<comment type="catalytic activity">
    <reaction evidence="1">
        <text>a plastoquinone + NADPH + (n+1) H(+)(in) = a plastoquinol + NADP(+) + n H(+)(out)</text>
        <dbReference type="Rhea" id="RHEA:42612"/>
        <dbReference type="Rhea" id="RHEA-COMP:9561"/>
        <dbReference type="Rhea" id="RHEA-COMP:9562"/>
        <dbReference type="ChEBI" id="CHEBI:15378"/>
        <dbReference type="ChEBI" id="CHEBI:17757"/>
        <dbReference type="ChEBI" id="CHEBI:57783"/>
        <dbReference type="ChEBI" id="CHEBI:58349"/>
        <dbReference type="ChEBI" id="CHEBI:62192"/>
    </reaction>
</comment>
<comment type="subunit">
    <text evidence="1">NDH is composed of at least 16 different subunits, 5 of which are encoded in the nucleus.</text>
</comment>
<comment type="subcellular location">
    <subcellularLocation>
        <location evidence="1">Plastid</location>
        <location evidence="1">Chloroplast thylakoid membrane</location>
        <topology evidence="1">Peripheral membrane protein</topology>
        <orientation evidence="1">Stromal side</orientation>
    </subcellularLocation>
</comment>
<comment type="similarity">
    <text evidence="1">Belongs to the complex I 49 kDa subunit family.</text>
</comment>
<geneLocation type="chloroplast"/>
<name>NDHH_SOLBU</name>
<evidence type="ECO:0000255" key="1">
    <source>
        <dbReference type="HAMAP-Rule" id="MF_01358"/>
    </source>
</evidence>
<organism>
    <name type="scientific">Solanum bulbocastanum</name>
    <name type="common">Wild potato</name>
    <dbReference type="NCBI Taxonomy" id="147425"/>
    <lineage>
        <taxon>Eukaryota</taxon>
        <taxon>Viridiplantae</taxon>
        <taxon>Streptophyta</taxon>
        <taxon>Embryophyta</taxon>
        <taxon>Tracheophyta</taxon>
        <taxon>Spermatophyta</taxon>
        <taxon>Magnoliopsida</taxon>
        <taxon>eudicotyledons</taxon>
        <taxon>Gunneridae</taxon>
        <taxon>Pentapetalae</taxon>
        <taxon>asterids</taxon>
        <taxon>lamiids</taxon>
        <taxon>Solanales</taxon>
        <taxon>Solanaceae</taxon>
        <taxon>Solanoideae</taxon>
        <taxon>Solaneae</taxon>
        <taxon>Solanum</taxon>
    </lineage>
</organism>
<proteinExistence type="inferred from homology"/>
<gene>
    <name evidence="1" type="primary">ndhH</name>
</gene>
<reference key="1">
    <citation type="journal article" date="2006" name="Theor. Appl. Genet.">
        <title>Complete chloroplast genome sequences of Solanum bulbocastanum, Solanum lycopersicum and comparative analyses with other Solanaceae genomes.</title>
        <authorList>
            <person name="Daniell H."/>
            <person name="Lee S.-B."/>
            <person name="Grevich J."/>
            <person name="Saski C."/>
            <person name="Quesada-Vargas T."/>
            <person name="Guda C."/>
            <person name="Tomkins J."/>
            <person name="Jansen R.K."/>
        </authorList>
    </citation>
    <scope>NUCLEOTIDE SEQUENCE [LARGE SCALE GENOMIC DNA]</scope>
    <source>
        <strain>cv. PT29</strain>
    </source>
</reference>
<keyword id="KW-0150">Chloroplast</keyword>
<keyword id="KW-0472">Membrane</keyword>
<keyword id="KW-0520">NAD</keyword>
<keyword id="KW-0521">NADP</keyword>
<keyword id="KW-0934">Plastid</keyword>
<keyword id="KW-0618">Plastoquinone</keyword>
<keyword id="KW-0874">Quinone</keyword>
<keyword id="KW-0793">Thylakoid</keyword>
<keyword id="KW-1278">Translocase</keyword>
<keyword id="KW-0813">Transport</keyword>
<dbReference type="EC" id="7.1.1.-" evidence="1"/>
<dbReference type="EMBL" id="DQ347958">
    <property type="protein sequence ID" value="ABC56270.1"/>
    <property type="molecule type" value="Genomic_DNA"/>
</dbReference>
<dbReference type="RefSeq" id="YP_538906.1">
    <property type="nucleotide sequence ID" value="NC_007943.1"/>
</dbReference>
<dbReference type="SMR" id="Q2MID1"/>
<dbReference type="GeneID" id="3989470"/>
<dbReference type="GO" id="GO:0009535">
    <property type="term" value="C:chloroplast thylakoid membrane"/>
    <property type="evidence" value="ECO:0007669"/>
    <property type="project" value="UniProtKB-SubCell"/>
</dbReference>
<dbReference type="GO" id="GO:0051287">
    <property type="term" value="F:NAD binding"/>
    <property type="evidence" value="ECO:0007669"/>
    <property type="project" value="InterPro"/>
</dbReference>
<dbReference type="GO" id="GO:0016655">
    <property type="term" value="F:oxidoreductase activity, acting on NAD(P)H, quinone or similar compound as acceptor"/>
    <property type="evidence" value="ECO:0007669"/>
    <property type="project" value="UniProtKB-UniRule"/>
</dbReference>
<dbReference type="GO" id="GO:0048038">
    <property type="term" value="F:quinone binding"/>
    <property type="evidence" value="ECO:0007669"/>
    <property type="project" value="UniProtKB-KW"/>
</dbReference>
<dbReference type="GO" id="GO:0019684">
    <property type="term" value="P:photosynthesis, light reaction"/>
    <property type="evidence" value="ECO:0007669"/>
    <property type="project" value="UniProtKB-UniRule"/>
</dbReference>
<dbReference type="FunFam" id="1.10.645.10:FF:000003">
    <property type="entry name" value="NAD(P)H-quinone oxidoreductase subunit H, chloroplastic"/>
    <property type="match status" value="1"/>
</dbReference>
<dbReference type="Gene3D" id="1.10.645.10">
    <property type="entry name" value="Cytochrome-c3 Hydrogenase, chain B"/>
    <property type="match status" value="1"/>
</dbReference>
<dbReference type="HAMAP" id="MF_01358">
    <property type="entry name" value="NDH1_NuoD"/>
    <property type="match status" value="1"/>
</dbReference>
<dbReference type="InterPro" id="IPR001135">
    <property type="entry name" value="NADH_Q_OxRdtase_suD"/>
</dbReference>
<dbReference type="InterPro" id="IPR014029">
    <property type="entry name" value="NADH_UbQ_OxRdtase_49kDa_CS"/>
</dbReference>
<dbReference type="InterPro" id="IPR022885">
    <property type="entry name" value="NDH1_su_D/H"/>
</dbReference>
<dbReference type="InterPro" id="IPR029014">
    <property type="entry name" value="NiFe-Hase_large"/>
</dbReference>
<dbReference type="NCBIfam" id="NF004739">
    <property type="entry name" value="PRK06075.1"/>
    <property type="match status" value="1"/>
</dbReference>
<dbReference type="NCBIfam" id="NF005649">
    <property type="entry name" value="PRK07415.1"/>
    <property type="match status" value="1"/>
</dbReference>
<dbReference type="PANTHER" id="PTHR11993:SF10">
    <property type="entry name" value="NADH DEHYDROGENASE [UBIQUINONE] IRON-SULFUR PROTEIN 2, MITOCHONDRIAL"/>
    <property type="match status" value="1"/>
</dbReference>
<dbReference type="PANTHER" id="PTHR11993">
    <property type="entry name" value="NADH-UBIQUINONE OXIDOREDUCTASE 49 KDA SUBUNIT"/>
    <property type="match status" value="1"/>
</dbReference>
<dbReference type="Pfam" id="PF00346">
    <property type="entry name" value="Complex1_49kDa"/>
    <property type="match status" value="1"/>
</dbReference>
<dbReference type="SUPFAM" id="SSF56762">
    <property type="entry name" value="HydB/Nqo4-like"/>
    <property type="match status" value="1"/>
</dbReference>
<dbReference type="PROSITE" id="PS00535">
    <property type="entry name" value="COMPLEX1_49K"/>
    <property type="match status" value="1"/>
</dbReference>
<feature type="chain" id="PRO_0000358026" description="NAD(P)H-quinone oxidoreductase subunit H, chloroplastic">
    <location>
        <begin position="1"/>
        <end position="393"/>
    </location>
</feature>
<accession>Q2MID1</accession>